<name>ILVI_BUCSC</name>
<comment type="catalytic activity">
    <reaction>
        <text>2 pyruvate + H(+) = (2S)-2-acetolactate + CO2</text>
        <dbReference type="Rhea" id="RHEA:25249"/>
        <dbReference type="ChEBI" id="CHEBI:15361"/>
        <dbReference type="ChEBI" id="CHEBI:15378"/>
        <dbReference type="ChEBI" id="CHEBI:16526"/>
        <dbReference type="ChEBI" id="CHEBI:58476"/>
        <dbReference type="EC" id="2.2.1.6"/>
    </reaction>
</comment>
<comment type="cofactor">
    <cofactor evidence="1">
        <name>Mg(2+)</name>
        <dbReference type="ChEBI" id="CHEBI:18420"/>
    </cofactor>
    <text evidence="1">Binds 1 Mg(2+) ion per subunit.</text>
</comment>
<comment type="cofactor">
    <cofactor evidence="1">
        <name>thiamine diphosphate</name>
        <dbReference type="ChEBI" id="CHEBI:58937"/>
    </cofactor>
    <text evidence="1">Binds 1 thiamine pyrophosphate per subunit.</text>
</comment>
<comment type="pathway">
    <text>Amino-acid biosynthesis; L-isoleucine biosynthesis; L-isoleucine from 2-oxobutanoate: step 1/4.</text>
</comment>
<comment type="pathway">
    <text>Amino-acid biosynthesis; L-valine biosynthesis; L-valine from pyruvate: step 1/4.</text>
</comment>
<comment type="subunit">
    <text evidence="1">Dimer of large and small chains.</text>
</comment>
<comment type="miscellaneous">
    <text evidence="1">Contains 1 molecule of FAD per monomer. The role of this cofactor is not clear considering that the reaction does not involve redox chemistry (By similarity).</text>
</comment>
<comment type="similarity">
    <text evidence="2">Belongs to the TPP enzyme family.</text>
</comment>
<sequence length="574" mass="63740">MEMLSGSEMIIQSLIDQGIKYIFGYPGGAVLDIYDSLKSTKKIKHILVRHEQGATHMADGYARATGKIGVVLVTSGPGATNSITGIATAYMDSIPIVVISGQVSSSLIGYDAFQECDMIGISRPIVKHSFLVKKTEDIPITFKKAFWLASSGRPGPIVIDLPKDILNSYNKKPYIWPIEVNIRSYNPITKGHSRQIKKAIDILKLSKQPVIYAGGGVISANCHNELKELAEKLNIPVTTSLMALGAFPGNHPQNLQMLGMHGTYEANMAMHYADVILAIGVRFDDRTTNNVKKYCPNATIIHIDIDPTSISKTITAHIPIVGNAKNVLQQILVFINSNMFVKEFYCLKKWWIKIQSWKNKNSLNFDTNSDNIKPQSVIKTIWKLTKGKAFITSDVGQHQMFAALYYSFQKPRRWINSGGLGTMGFGLPAALGVKLAFPNETVICVTGDGSIQMNIQELSTAMQYELPILILNLNNKSLGMVKQWQDIIYSGRHSHSYMKSLPNFIKLAESYGHSGISINTPKELEKKLQLALEKLQNGHLVFVDIKIDASEHVYPMQIRDGGMNNMLLRKNGQK</sequence>
<feature type="chain" id="PRO_0000090794" description="Acetolactate synthase large subunit">
    <location>
        <begin position="1"/>
        <end position="574"/>
    </location>
</feature>
<feature type="region of interest" description="Thiamine pyrophosphate binding">
    <location>
        <begin position="397"/>
        <end position="477"/>
    </location>
</feature>
<feature type="binding site" evidence="1">
    <location>
        <position position="51"/>
    </location>
    <ligand>
        <name>thiamine diphosphate</name>
        <dbReference type="ChEBI" id="CHEBI:58937"/>
    </ligand>
</feature>
<feature type="binding site" evidence="1">
    <location>
        <position position="153"/>
    </location>
    <ligand>
        <name>FAD</name>
        <dbReference type="ChEBI" id="CHEBI:57692"/>
    </ligand>
</feature>
<feature type="binding site" evidence="1">
    <location>
        <begin position="261"/>
        <end position="282"/>
    </location>
    <ligand>
        <name>FAD</name>
        <dbReference type="ChEBI" id="CHEBI:57692"/>
    </ligand>
</feature>
<feature type="binding site" evidence="1">
    <location>
        <begin position="304"/>
        <end position="323"/>
    </location>
    <ligand>
        <name>FAD</name>
        <dbReference type="ChEBI" id="CHEBI:57692"/>
    </ligand>
</feature>
<feature type="binding site" evidence="1">
    <location>
        <position position="448"/>
    </location>
    <ligand>
        <name>Mg(2+)</name>
        <dbReference type="ChEBI" id="CHEBI:18420"/>
    </ligand>
</feature>
<feature type="binding site" evidence="1">
    <location>
        <position position="475"/>
    </location>
    <ligand>
        <name>Mg(2+)</name>
        <dbReference type="ChEBI" id="CHEBI:18420"/>
    </ligand>
</feature>
<evidence type="ECO:0000250" key="1"/>
<evidence type="ECO:0000305" key="2"/>
<organism>
    <name type="scientific">Buchnera aphidicola subsp. Schlechtendalia chinensis</name>
    <dbReference type="NCBI Taxonomy" id="118110"/>
    <lineage>
        <taxon>Bacteria</taxon>
        <taxon>Pseudomonadati</taxon>
        <taxon>Pseudomonadota</taxon>
        <taxon>Gammaproteobacteria</taxon>
        <taxon>Enterobacterales</taxon>
        <taxon>Erwiniaceae</taxon>
        <taxon>Buchnera</taxon>
    </lineage>
</organism>
<keyword id="KW-0028">Amino-acid biosynthesis</keyword>
<keyword id="KW-0100">Branched-chain amino acid biosynthesis</keyword>
<keyword id="KW-0274">FAD</keyword>
<keyword id="KW-0285">Flavoprotein</keyword>
<keyword id="KW-0460">Magnesium</keyword>
<keyword id="KW-0479">Metal-binding</keyword>
<keyword id="KW-0786">Thiamine pyrophosphate</keyword>
<keyword id="KW-0808">Transferase</keyword>
<protein>
    <recommendedName>
        <fullName>Acetolactate synthase large subunit</fullName>
        <shortName>AHAS</shortName>
        <ecNumber>2.2.1.6</ecNumber>
    </recommendedName>
    <alternativeName>
        <fullName>Acetohydroxy-acid synthase large subunit</fullName>
        <shortName>ALS</shortName>
    </alternativeName>
</protein>
<reference key="1">
    <citation type="journal article" date="1999" name="Mol. Biol. Evol.">
        <title>Sequence evolution in bacterial endosymbionts having extreme base compositions.</title>
        <authorList>
            <person name="Clark M.A."/>
            <person name="Moran N.A."/>
            <person name="Baumann P."/>
        </authorList>
    </citation>
    <scope>NUCLEOTIDE SEQUENCE [GENOMIC DNA]</scope>
</reference>
<proteinExistence type="inferred from homology"/>
<accession>Q9RQ65</accession>
<gene>
    <name type="primary">ilvI</name>
</gene>
<dbReference type="EC" id="2.2.1.6"/>
<dbReference type="EMBL" id="AF129502">
    <property type="protein sequence ID" value="AAF13791.1"/>
    <property type="molecule type" value="Genomic_DNA"/>
</dbReference>
<dbReference type="RefSeq" id="WP_075474080.1">
    <property type="nucleotide sequence ID" value="NZ_CP011299.1"/>
</dbReference>
<dbReference type="SMR" id="Q9RQ65"/>
<dbReference type="STRING" id="118110.XW81_01055"/>
<dbReference type="OrthoDB" id="9785953at2"/>
<dbReference type="UniPathway" id="UPA00047">
    <property type="reaction ID" value="UER00055"/>
</dbReference>
<dbReference type="UniPathway" id="UPA00049">
    <property type="reaction ID" value="UER00059"/>
</dbReference>
<dbReference type="GO" id="GO:0005948">
    <property type="term" value="C:acetolactate synthase complex"/>
    <property type="evidence" value="ECO:0007669"/>
    <property type="project" value="TreeGrafter"/>
</dbReference>
<dbReference type="GO" id="GO:0003984">
    <property type="term" value="F:acetolactate synthase activity"/>
    <property type="evidence" value="ECO:0007669"/>
    <property type="project" value="UniProtKB-EC"/>
</dbReference>
<dbReference type="GO" id="GO:0050660">
    <property type="term" value="F:flavin adenine dinucleotide binding"/>
    <property type="evidence" value="ECO:0007669"/>
    <property type="project" value="InterPro"/>
</dbReference>
<dbReference type="GO" id="GO:0000287">
    <property type="term" value="F:magnesium ion binding"/>
    <property type="evidence" value="ECO:0007669"/>
    <property type="project" value="InterPro"/>
</dbReference>
<dbReference type="GO" id="GO:0030976">
    <property type="term" value="F:thiamine pyrophosphate binding"/>
    <property type="evidence" value="ECO:0007669"/>
    <property type="project" value="InterPro"/>
</dbReference>
<dbReference type="GO" id="GO:0009097">
    <property type="term" value="P:isoleucine biosynthetic process"/>
    <property type="evidence" value="ECO:0007669"/>
    <property type="project" value="UniProtKB-UniPathway"/>
</dbReference>
<dbReference type="GO" id="GO:0009099">
    <property type="term" value="P:L-valine biosynthetic process"/>
    <property type="evidence" value="ECO:0007669"/>
    <property type="project" value="UniProtKB-UniPathway"/>
</dbReference>
<dbReference type="CDD" id="cd02015">
    <property type="entry name" value="TPP_AHAS"/>
    <property type="match status" value="1"/>
</dbReference>
<dbReference type="CDD" id="cd07035">
    <property type="entry name" value="TPP_PYR_POX_like"/>
    <property type="match status" value="1"/>
</dbReference>
<dbReference type="FunFam" id="3.40.50.1220:FF:000008">
    <property type="entry name" value="Acetolactate synthase"/>
    <property type="match status" value="1"/>
</dbReference>
<dbReference type="FunFam" id="3.40.50.970:FF:000007">
    <property type="entry name" value="Acetolactate synthase"/>
    <property type="match status" value="1"/>
</dbReference>
<dbReference type="FunFam" id="3.40.50.970:FF:000016">
    <property type="entry name" value="Acetolactate synthase"/>
    <property type="match status" value="1"/>
</dbReference>
<dbReference type="Gene3D" id="3.40.50.970">
    <property type="match status" value="2"/>
</dbReference>
<dbReference type="Gene3D" id="3.40.50.1220">
    <property type="entry name" value="TPP-binding domain"/>
    <property type="match status" value="1"/>
</dbReference>
<dbReference type="InterPro" id="IPR012846">
    <property type="entry name" value="Acetolactate_synth_lsu"/>
</dbReference>
<dbReference type="InterPro" id="IPR039368">
    <property type="entry name" value="AHAS_TPP"/>
</dbReference>
<dbReference type="InterPro" id="IPR029035">
    <property type="entry name" value="DHS-like_NAD/FAD-binding_dom"/>
</dbReference>
<dbReference type="InterPro" id="IPR029061">
    <property type="entry name" value="THDP-binding"/>
</dbReference>
<dbReference type="InterPro" id="IPR012000">
    <property type="entry name" value="Thiamin_PyroP_enz_cen_dom"/>
</dbReference>
<dbReference type="InterPro" id="IPR012001">
    <property type="entry name" value="Thiamin_PyroP_enz_TPP-bd_dom"/>
</dbReference>
<dbReference type="InterPro" id="IPR000399">
    <property type="entry name" value="TPP-bd_CS"/>
</dbReference>
<dbReference type="InterPro" id="IPR045229">
    <property type="entry name" value="TPP_enz"/>
</dbReference>
<dbReference type="InterPro" id="IPR011766">
    <property type="entry name" value="TPP_enzyme_TPP-bd"/>
</dbReference>
<dbReference type="NCBIfam" id="TIGR00118">
    <property type="entry name" value="acolac_lg"/>
    <property type="match status" value="1"/>
</dbReference>
<dbReference type="PANTHER" id="PTHR18968:SF13">
    <property type="entry name" value="ACETOLACTATE SYNTHASE CATALYTIC SUBUNIT, MITOCHONDRIAL"/>
    <property type="match status" value="1"/>
</dbReference>
<dbReference type="PANTHER" id="PTHR18968">
    <property type="entry name" value="THIAMINE PYROPHOSPHATE ENZYMES"/>
    <property type="match status" value="1"/>
</dbReference>
<dbReference type="Pfam" id="PF02775">
    <property type="entry name" value="TPP_enzyme_C"/>
    <property type="match status" value="1"/>
</dbReference>
<dbReference type="Pfam" id="PF00205">
    <property type="entry name" value="TPP_enzyme_M"/>
    <property type="match status" value="1"/>
</dbReference>
<dbReference type="Pfam" id="PF02776">
    <property type="entry name" value="TPP_enzyme_N"/>
    <property type="match status" value="1"/>
</dbReference>
<dbReference type="SUPFAM" id="SSF52467">
    <property type="entry name" value="DHS-like NAD/FAD-binding domain"/>
    <property type="match status" value="1"/>
</dbReference>
<dbReference type="SUPFAM" id="SSF52518">
    <property type="entry name" value="Thiamin diphosphate-binding fold (THDP-binding)"/>
    <property type="match status" value="2"/>
</dbReference>
<dbReference type="PROSITE" id="PS00187">
    <property type="entry name" value="TPP_ENZYMES"/>
    <property type="match status" value="1"/>
</dbReference>